<name>TREA_ECOSM</name>
<protein>
    <recommendedName>
        <fullName evidence="1">Periplasmic trehalase</fullName>
        <ecNumber evidence="1">3.2.1.28</ecNumber>
    </recommendedName>
    <alternativeName>
        <fullName evidence="1">Alpha,alpha-trehalase</fullName>
    </alternativeName>
    <alternativeName>
        <fullName evidence="1">Alpha,alpha-trehalose glucohydrolase</fullName>
    </alternativeName>
</protein>
<sequence>MKSPTPSRPQKMALIPACIFLCFAALSVQAEETSVTPQPPDILLGPLFNDVQNAKLFPDQKTFADAVPNSDPLMILADYRMQQNQSGFDLRHFVNVNFTLPKEGEKYVPPEGQSLREHIDGLWPVLTRATENTEKWDSLLPLPEPYVVPGGRFREVYYWDSYFTMLGLAESGHWDKVADMVANFAHEIDTYGHIPNGNRSYYLSRSQPPFFALMVELLAQHEGDAALKQYLPQMQKEYAYWMDGVENLQAGQQEKRVVKLQDGTLLNRYWDDRDTPRPESWVEDIATAKSNPNRPATEIYRDLRSAAASGWDFSSRWMDNPQQLNTLRTTSIVPVDLNSLMFKMEKILARASKAAGDNAMANQYETLANARQKGIEKYLWNDQQGWYADYDLKSHKVRNQLTAAALFPLYVNAAAKDRASKMATATKTHLLQPGGLNTTSVKSGQQWDAPNGWAPLQWVATEGLQNYGQKEVAMDISWHFLTNVQNTYDREKKLVEKYDVSATGTGGGGGEYPLQDGFGWTNGVTLKMLDLICPKEQPCDNVPATRPLSESTTQPLKQKEAEPTP</sequence>
<proteinExistence type="inferred from homology"/>
<accession>B1LHA4</accession>
<dbReference type="EC" id="3.2.1.28" evidence="1"/>
<dbReference type="EMBL" id="CP000970">
    <property type="protein sequence ID" value="ACB17767.1"/>
    <property type="molecule type" value="Genomic_DNA"/>
</dbReference>
<dbReference type="RefSeq" id="WP_000841922.1">
    <property type="nucleotide sequence ID" value="NC_010498.1"/>
</dbReference>
<dbReference type="SMR" id="B1LHA4"/>
<dbReference type="CAZy" id="GH37">
    <property type="family name" value="Glycoside Hydrolase Family 37"/>
</dbReference>
<dbReference type="KEGG" id="ecm:EcSMS35_1946"/>
<dbReference type="HOGENOM" id="CLU_006451_3_1_6"/>
<dbReference type="Proteomes" id="UP000007011">
    <property type="component" value="Chromosome"/>
</dbReference>
<dbReference type="GO" id="GO:0042597">
    <property type="term" value="C:periplasmic space"/>
    <property type="evidence" value="ECO:0007669"/>
    <property type="project" value="UniProtKB-SubCell"/>
</dbReference>
<dbReference type="GO" id="GO:0004555">
    <property type="term" value="F:alpha,alpha-trehalase activity"/>
    <property type="evidence" value="ECO:0007669"/>
    <property type="project" value="UniProtKB-UniRule"/>
</dbReference>
<dbReference type="GO" id="GO:0071474">
    <property type="term" value="P:cellular hyperosmotic response"/>
    <property type="evidence" value="ECO:0007669"/>
    <property type="project" value="InterPro"/>
</dbReference>
<dbReference type="GO" id="GO:0005993">
    <property type="term" value="P:trehalose catabolic process"/>
    <property type="evidence" value="ECO:0007669"/>
    <property type="project" value="InterPro"/>
</dbReference>
<dbReference type="FunFam" id="1.50.10.10:FF:000003">
    <property type="entry name" value="Cytoplasmic trehalase"/>
    <property type="match status" value="1"/>
</dbReference>
<dbReference type="Gene3D" id="1.50.10.10">
    <property type="match status" value="1"/>
</dbReference>
<dbReference type="HAMAP" id="MF_01060">
    <property type="entry name" value="Peripl_trehalase"/>
    <property type="match status" value="1"/>
</dbReference>
<dbReference type="InterPro" id="IPR008928">
    <property type="entry name" value="6-hairpin_glycosidase_sf"/>
</dbReference>
<dbReference type="InterPro" id="IPR012341">
    <property type="entry name" value="6hp_glycosidase-like_sf"/>
</dbReference>
<dbReference type="InterPro" id="IPR001661">
    <property type="entry name" value="Glyco_hydro_37"/>
</dbReference>
<dbReference type="InterPro" id="IPR018232">
    <property type="entry name" value="Glyco_hydro_37_CS"/>
</dbReference>
<dbReference type="InterPro" id="IPR023720">
    <property type="entry name" value="Trehalase_periplasmic"/>
</dbReference>
<dbReference type="NCBIfam" id="NF009773">
    <property type="entry name" value="PRK13270.1"/>
    <property type="match status" value="1"/>
</dbReference>
<dbReference type="NCBIfam" id="NF009774">
    <property type="entry name" value="PRK13271.1"/>
    <property type="match status" value="1"/>
</dbReference>
<dbReference type="PANTHER" id="PTHR23403">
    <property type="entry name" value="TREHALASE"/>
    <property type="match status" value="1"/>
</dbReference>
<dbReference type="PANTHER" id="PTHR23403:SF1">
    <property type="entry name" value="TREHALASE"/>
    <property type="match status" value="1"/>
</dbReference>
<dbReference type="Pfam" id="PF01204">
    <property type="entry name" value="Trehalase"/>
    <property type="match status" value="1"/>
</dbReference>
<dbReference type="PRINTS" id="PR00744">
    <property type="entry name" value="GLHYDRLASE37"/>
</dbReference>
<dbReference type="SUPFAM" id="SSF48208">
    <property type="entry name" value="Six-hairpin glycosidases"/>
    <property type="match status" value="1"/>
</dbReference>
<dbReference type="PROSITE" id="PS00927">
    <property type="entry name" value="TREHALASE_1"/>
    <property type="match status" value="1"/>
</dbReference>
<dbReference type="PROSITE" id="PS00928">
    <property type="entry name" value="TREHALASE_2"/>
    <property type="match status" value="1"/>
</dbReference>
<feature type="signal peptide" evidence="1">
    <location>
        <begin position="1"/>
        <end position="30"/>
    </location>
</feature>
<feature type="chain" id="PRO_1000136422" description="Periplasmic trehalase">
    <location>
        <begin position="31"/>
        <end position="565"/>
    </location>
</feature>
<feature type="region of interest" description="Disordered" evidence="2">
    <location>
        <begin position="539"/>
        <end position="565"/>
    </location>
</feature>
<feature type="active site" description="Proton donor/acceptor" evidence="1">
    <location>
        <position position="312"/>
    </location>
</feature>
<feature type="active site" description="Proton donor/acceptor" evidence="1">
    <location>
        <position position="496"/>
    </location>
</feature>
<feature type="binding site" evidence="1">
    <location>
        <position position="152"/>
    </location>
    <ligand>
        <name>substrate</name>
    </ligand>
</feature>
<feature type="binding site" evidence="1">
    <location>
        <begin position="159"/>
        <end position="160"/>
    </location>
    <ligand>
        <name>substrate</name>
    </ligand>
</feature>
<feature type="binding site" evidence="1">
    <location>
        <position position="196"/>
    </location>
    <ligand>
        <name>substrate</name>
    </ligand>
</feature>
<feature type="binding site" evidence="1">
    <location>
        <begin position="205"/>
        <end position="207"/>
    </location>
    <ligand>
        <name>substrate</name>
    </ligand>
</feature>
<feature type="binding site" evidence="1">
    <location>
        <begin position="277"/>
        <end position="279"/>
    </location>
    <ligand>
        <name>substrate</name>
    </ligand>
</feature>
<feature type="binding site" evidence="1">
    <location>
        <position position="310"/>
    </location>
    <ligand>
        <name>substrate</name>
    </ligand>
</feature>
<feature type="binding site" evidence="1">
    <location>
        <position position="511"/>
    </location>
    <ligand>
        <name>substrate</name>
    </ligand>
</feature>
<reference key="1">
    <citation type="journal article" date="2008" name="J. Bacteriol.">
        <title>Insights into the environmental resistance gene pool from the genome sequence of the multidrug-resistant environmental isolate Escherichia coli SMS-3-5.</title>
        <authorList>
            <person name="Fricke W.F."/>
            <person name="Wright M.S."/>
            <person name="Lindell A.H."/>
            <person name="Harkins D.M."/>
            <person name="Baker-Austin C."/>
            <person name="Ravel J."/>
            <person name="Stepanauskas R."/>
        </authorList>
    </citation>
    <scope>NUCLEOTIDE SEQUENCE [LARGE SCALE GENOMIC DNA]</scope>
    <source>
        <strain>SMS-3-5 / SECEC</strain>
    </source>
</reference>
<gene>
    <name evidence="1" type="primary">treA</name>
    <name type="ordered locus">EcSMS35_1946</name>
</gene>
<evidence type="ECO:0000255" key="1">
    <source>
        <dbReference type="HAMAP-Rule" id="MF_01060"/>
    </source>
</evidence>
<evidence type="ECO:0000256" key="2">
    <source>
        <dbReference type="SAM" id="MobiDB-lite"/>
    </source>
</evidence>
<organism>
    <name type="scientific">Escherichia coli (strain SMS-3-5 / SECEC)</name>
    <dbReference type="NCBI Taxonomy" id="439855"/>
    <lineage>
        <taxon>Bacteria</taxon>
        <taxon>Pseudomonadati</taxon>
        <taxon>Pseudomonadota</taxon>
        <taxon>Gammaproteobacteria</taxon>
        <taxon>Enterobacterales</taxon>
        <taxon>Enterobacteriaceae</taxon>
        <taxon>Escherichia</taxon>
    </lineage>
</organism>
<comment type="function">
    <text evidence="1">Provides the cells with the ability to utilize trehalose at high osmolarity by splitting it into glucose molecules that can subsequently be taken up by the phosphotransferase-mediated uptake system.</text>
</comment>
<comment type="catalytic activity">
    <reaction evidence="1">
        <text>alpha,alpha-trehalose + H2O = alpha-D-glucose + beta-D-glucose</text>
        <dbReference type="Rhea" id="RHEA:32675"/>
        <dbReference type="ChEBI" id="CHEBI:15377"/>
        <dbReference type="ChEBI" id="CHEBI:15903"/>
        <dbReference type="ChEBI" id="CHEBI:16551"/>
        <dbReference type="ChEBI" id="CHEBI:17925"/>
        <dbReference type="EC" id="3.2.1.28"/>
    </reaction>
</comment>
<comment type="subunit">
    <text evidence="1">Monomer.</text>
</comment>
<comment type="subcellular location">
    <subcellularLocation>
        <location evidence="1">Periplasm</location>
    </subcellularLocation>
</comment>
<comment type="similarity">
    <text evidence="1">Belongs to the glycosyl hydrolase 37 family.</text>
</comment>
<keyword id="KW-0326">Glycosidase</keyword>
<keyword id="KW-0378">Hydrolase</keyword>
<keyword id="KW-0574">Periplasm</keyword>
<keyword id="KW-0732">Signal</keyword>